<reference key="1">
    <citation type="journal article" date="1998" name="Science">
        <title>Genome sequence of the nematode C. elegans: a platform for investigating biology.</title>
        <authorList>
            <consortium name="The C. elegans sequencing consortium"/>
        </authorList>
    </citation>
    <scope>NUCLEOTIDE SEQUENCE [LARGE SCALE GENOMIC DNA]</scope>
    <source>
        <strain>Bristol N2</strain>
    </source>
</reference>
<reference key="2">
    <citation type="journal article" date="2010" name="Mol. Biol. Cell">
        <title>RNF-121 is an endoplasmic reticulum-membrane E3 ubiquitin ligase involved in the regulation of beta-integrin.</title>
        <authorList>
            <person name="Darom A."/>
            <person name="Bening-Abu-Shach U."/>
            <person name="Broday L."/>
        </authorList>
    </citation>
    <scope>FUNCTION</scope>
    <scope>CATALYTIC ACTIVITY</scope>
    <scope>PATHWAY</scope>
    <scope>SUBCELLULAR LOCATION</scope>
    <scope>TISSUE SPECIFICITY</scope>
    <scope>DISRUPTION PHENOTYPE</scope>
    <scope>MUTAGENESIS OF CYS-222; VAL-224 AND CYS-225</scope>
</reference>
<reference key="3">
    <citation type="journal article" date="2012" name="Mech. Dev.">
        <title>CCDC-55 is required for larval development and distal tip cell migration in Caenorhabditis elegans.</title>
        <authorList>
            <person name="Kovacevic I."/>
            <person name="Ho R."/>
            <person name="Cram E.J."/>
        </authorList>
    </citation>
    <scope>FUNCTION</scope>
</reference>
<gene>
    <name evidence="6" type="primary">rnf-121</name>
    <name evidence="6" type="ORF">C16C10.5</name>
</gene>
<dbReference type="EC" id="2.3.2.27" evidence="3"/>
<dbReference type="EMBL" id="BX284603">
    <property type="protein sequence ID" value="CAA86743.2"/>
    <property type="molecule type" value="Genomic_DNA"/>
</dbReference>
<dbReference type="PIR" id="T19326">
    <property type="entry name" value="T19326"/>
</dbReference>
<dbReference type="RefSeq" id="NP_497832.2">
    <property type="nucleotide sequence ID" value="NM_065431.6"/>
</dbReference>
<dbReference type="BioGRID" id="47529">
    <property type="interactions" value="2"/>
</dbReference>
<dbReference type="FunCoup" id="Q09251">
    <property type="interactions" value="2254"/>
</dbReference>
<dbReference type="STRING" id="6239.C16C10.5.1"/>
<dbReference type="PaxDb" id="6239-C16C10.5"/>
<dbReference type="PeptideAtlas" id="Q09251"/>
<dbReference type="EnsemblMetazoa" id="C16C10.5.1">
    <property type="protein sequence ID" value="C16C10.5.1"/>
    <property type="gene ID" value="WBGene00007626"/>
</dbReference>
<dbReference type="GeneID" id="182681"/>
<dbReference type="KEGG" id="cel:CELE_C16C10.5"/>
<dbReference type="AGR" id="WB:WBGene00007626"/>
<dbReference type="CTD" id="182681"/>
<dbReference type="WormBase" id="C16C10.5">
    <property type="protein sequence ID" value="CE49432"/>
    <property type="gene ID" value="WBGene00007626"/>
    <property type="gene designation" value="rnf-121"/>
</dbReference>
<dbReference type="eggNOG" id="KOG1734">
    <property type="taxonomic scope" value="Eukaryota"/>
</dbReference>
<dbReference type="GeneTree" id="ENSGT00390000013075"/>
<dbReference type="HOGENOM" id="CLU_055016_1_0_1"/>
<dbReference type="InParanoid" id="Q09251"/>
<dbReference type="OMA" id="PYWERTH"/>
<dbReference type="OrthoDB" id="446635at2759"/>
<dbReference type="PhylomeDB" id="Q09251"/>
<dbReference type="UniPathway" id="UPA00143"/>
<dbReference type="PRO" id="PR:Q09251"/>
<dbReference type="Proteomes" id="UP000001940">
    <property type="component" value="Chromosome III"/>
</dbReference>
<dbReference type="Bgee" id="WBGene00007626">
    <property type="expression patterns" value="Expressed in pharyngeal muscle cell (C elegans) and 4 other cell types or tissues"/>
</dbReference>
<dbReference type="GO" id="GO:0005789">
    <property type="term" value="C:endoplasmic reticulum membrane"/>
    <property type="evidence" value="ECO:0000314"/>
    <property type="project" value="WormBase"/>
</dbReference>
<dbReference type="GO" id="GO:0000139">
    <property type="term" value="C:Golgi membrane"/>
    <property type="evidence" value="ECO:0000314"/>
    <property type="project" value="WormBase"/>
</dbReference>
<dbReference type="GO" id="GO:0033017">
    <property type="term" value="C:sarcoplasmic reticulum membrane"/>
    <property type="evidence" value="ECO:0000314"/>
    <property type="project" value="WormBase"/>
</dbReference>
<dbReference type="GO" id="GO:0061630">
    <property type="term" value="F:ubiquitin protein ligase activity"/>
    <property type="evidence" value="ECO:0000314"/>
    <property type="project" value="WormBase"/>
</dbReference>
<dbReference type="GO" id="GO:0008270">
    <property type="term" value="F:zinc ion binding"/>
    <property type="evidence" value="ECO:0007669"/>
    <property type="project" value="UniProtKB-KW"/>
</dbReference>
<dbReference type="GO" id="GO:0036503">
    <property type="term" value="P:ERAD pathway"/>
    <property type="evidence" value="ECO:0000315"/>
    <property type="project" value="WormBase"/>
</dbReference>
<dbReference type="GO" id="GO:0040039">
    <property type="term" value="P:inductive cell migration"/>
    <property type="evidence" value="ECO:0000315"/>
    <property type="project" value="WormBase"/>
</dbReference>
<dbReference type="GO" id="GO:0036499">
    <property type="term" value="P:PERK-mediated unfolded protein response"/>
    <property type="evidence" value="ECO:0000315"/>
    <property type="project" value="WormBase"/>
</dbReference>
<dbReference type="GO" id="GO:0016567">
    <property type="term" value="P:protein ubiquitination"/>
    <property type="evidence" value="ECO:0007669"/>
    <property type="project" value="UniProtKB-UniPathway"/>
</dbReference>
<dbReference type="CDD" id="cd16475">
    <property type="entry name" value="RING-H2_RNF121-like"/>
    <property type="match status" value="1"/>
</dbReference>
<dbReference type="Gene3D" id="3.30.40.10">
    <property type="entry name" value="Zinc/RING finger domain, C3HC4 (zinc finger)"/>
    <property type="match status" value="1"/>
</dbReference>
<dbReference type="InterPro" id="IPR040176">
    <property type="entry name" value="RNF121/RNF175"/>
</dbReference>
<dbReference type="InterPro" id="IPR001841">
    <property type="entry name" value="Znf_RING"/>
</dbReference>
<dbReference type="InterPro" id="IPR013083">
    <property type="entry name" value="Znf_RING/FYVE/PHD"/>
</dbReference>
<dbReference type="PANTHER" id="PTHR13407:SF0">
    <property type="entry name" value="FI05221P"/>
    <property type="match status" value="1"/>
</dbReference>
<dbReference type="PANTHER" id="PTHR13407">
    <property type="entry name" value="RNF121 PROTEIN"/>
    <property type="match status" value="1"/>
</dbReference>
<dbReference type="Pfam" id="PF13639">
    <property type="entry name" value="zf-RING_2"/>
    <property type="match status" value="1"/>
</dbReference>
<dbReference type="SMART" id="SM00184">
    <property type="entry name" value="RING"/>
    <property type="match status" value="1"/>
</dbReference>
<dbReference type="SUPFAM" id="SSF57850">
    <property type="entry name" value="RING/U-box"/>
    <property type="match status" value="1"/>
</dbReference>
<dbReference type="PROSITE" id="PS50089">
    <property type="entry name" value="ZF_RING_2"/>
    <property type="match status" value="1"/>
</dbReference>
<organism>
    <name type="scientific">Caenorhabditis elegans</name>
    <dbReference type="NCBI Taxonomy" id="6239"/>
    <lineage>
        <taxon>Eukaryota</taxon>
        <taxon>Metazoa</taxon>
        <taxon>Ecdysozoa</taxon>
        <taxon>Nematoda</taxon>
        <taxon>Chromadorea</taxon>
        <taxon>Rhabditida</taxon>
        <taxon>Rhabditina</taxon>
        <taxon>Rhabditomorpha</taxon>
        <taxon>Rhabditoidea</taxon>
        <taxon>Rhabditidae</taxon>
        <taxon>Peloderinae</taxon>
        <taxon>Caenorhabditis</taxon>
    </lineage>
</organism>
<keyword id="KW-0256">Endoplasmic reticulum</keyword>
<keyword id="KW-0333">Golgi apparatus</keyword>
<keyword id="KW-0472">Membrane</keyword>
<keyword id="KW-0479">Metal-binding</keyword>
<keyword id="KW-1185">Reference proteome</keyword>
<keyword id="KW-0808">Transferase</keyword>
<keyword id="KW-0812">Transmembrane</keyword>
<keyword id="KW-1133">Transmembrane helix</keyword>
<keyword id="KW-0862">Zinc</keyword>
<keyword id="KW-0863">Zinc-finger</keyword>
<name>RN121_CAEEL</name>
<proteinExistence type="evidence at protein level"/>
<accession>Q09251</accession>
<protein>
    <recommendedName>
        <fullName evidence="5">E3 ubiquitin ligase rnf-121</fullName>
        <ecNumber evidence="3">2.3.2.27</ecNumber>
    </recommendedName>
    <alternativeName>
        <fullName evidence="6">RING finger protein 121</fullName>
    </alternativeName>
</protein>
<comment type="function">
    <text evidence="3 4">E3 ubiquitin ligase which accepts ubiquitin and transfers it to substrates such as the beta-integrin subunit pat-3, promoting their degradation by the endoplasmic reticulum-associated degradation (ERAD) pathway which is a pathway involved in ubiquitin-dependent degradation of misfolded endoplasmic reticulum proteins (PubMed:20357004). Negatively regulates the unfolded protein response to reduce endoplasmic reticulum stress (PubMed:20357004). Required for the cessation of distal tip cell migration at the end of larval morphogenesis (PubMed:22285439). Plays a role in germline and gonad development (PubMed:20357004).</text>
</comment>
<comment type="catalytic activity">
    <reaction evidence="3">
        <text>S-ubiquitinyl-[E2 ubiquitin-conjugating enzyme]-L-cysteine + [acceptor protein]-L-lysine = [E2 ubiquitin-conjugating enzyme]-L-cysteine + N(6)-ubiquitinyl-[acceptor protein]-L-lysine.</text>
        <dbReference type="EC" id="2.3.2.27"/>
    </reaction>
</comment>
<comment type="pathway">
    <text evidence="3">Protein modification; protein ubiquitination.</text>
</comment>
<comment type="subcellular location">
    <subcellularLocation>
        <location evidence="3">Endoplasmic reticulum membrane</location>
        <topology evidence="1">Multi-pass membrane protein</topology>
    </subcellularLocation>
    <subcellularLocation>
        <location evidence="3">Golgi apparatus membrane</location>
        <topology evidence="1">Multi-pass membrane protein</topology>
    </subcellularLocation>
</comment>
<comment type="tissue specificity">
    <text evidence="3">Expressed in body wall muscles, the hypodermis, seam cells, vulval cells, spermathecal cells, uterine cells and the distal tip cell (at protein level).</text>
</comment>
<comment type="disruption phenotype">
    <text evidence="3">RNAi-mediated knockdown in combination with tunicamycin treatment, which is an inhibitor of N-glycosylation, results in increased expression of hsp-4 in the intestine indicating endoplasmic reticulum stress and activation of the unfolded protein response.</text>
</comment>
<comment type="similarity">
    <text evidence="5">Belongs to the RNF121 family.</text>
</comment>
<feature type="chain" id="PRO_0000056322" description="E3 ubiquitin ligase rnf-121">
    <location>
        <begin position="1"/>
        <end position="335"/>
    </location>
</feature>
<feature type="topological domain" description="Cytoplasmic" evidence="5">
    <location>
        <begin position="1"/>
        <end position="47"/>
    </location>
</feature>
<feature type="transmembrane region" description="Helical" evidence="1">
    <location>
        <begin position="48"/>
        <end position="68"/>
    </location>
</feature>
<feature type="topological domain" description="Lumenal" evidence="5">
    <location>
        <begin position="69"/>
        <end position="72"/>
    </location>
</feature>
<feature type="transmembrane region" description="Helical" evidence="1">
    <location>
        <begin position="73"/>
        <end position="93"/>
    </location>
</feature>
<feature type="topological domain" description="Cytoplasmic" evidence="5">
    <location>
        <begin position="94"/>
        <end position="99"/>
    </location>
</feature>
<feature type="transmembrane region" description="Helical" evidence="1">
    <location>
        <begin position="100"/>
        <end position="120"/>
    </location>
</feature>
<feature type="topological domain" description="Lumenal" evidence="5">
    <location>
        <begin position="121"/>
        <end position="143"/>
    </location>
</feature>
<feature type="transmembrane region" description="Helical" evidence="1">
    <location>
        <begin position="144"/>
        <end position="164"/>
    </location>
</feature>
<feature type="topological domain" description="Cytoplasmic" evidence="5">
    <location>
        <begin position="165"/>
        <end position="168"/>
    </location>
</feature>
<feature type="transmembrane region" description="Helical" evidence="1">
    <location>
        <begin position="169"/>
        <end position="189"/>
    </location>
</feature>
<feature type="topological domain" description="Lumenal" evidence="5">
    <location>
        <begin position="190"/>
        <end position="335"/>
    </location>
</feature>
<feature type="zinc finger region" description="RING-type; atypical" evidence="2">
    <location>
        <begin position="222"/>
        <end position="284"/>
    </location>
</feature>
<feature type="mutagenesis site" description="Abolishes ligase activity; when associated with A-225." evidence="3">
    <original>C</original>
    <variation>A</variation>
    <location>
        <position position="222"/>
    </location>
</feature>
<feature type="mutagenesis site" description="Abolishes ligase activity." evidence="3">
    <original>V</original>
    <variation>A</variation>
    <location>
        <position position="224"/>
    </location>
</feature>
<feature type="mutagenesis site" description="Abolishes ligase activity; when associated with A-222." evidence="3">
    <original>C</original>
    <variation>A</variation>
    <location>
        <position position="225"/>
    </location>
</feature>
<sequence>MGQHGAIRLQNEVQEGMPPPHELTEEEQWAEEHRKMHEKHKGHEAMHMEMMVIFMISVIVGQIFLVTWKRKHFKSYQMCTLIGMLTIPVYVCFNRSWYRFLATWLVFCIFSAFIWLKASAQHISGGTPRFVYKWFLFLHKLSYVLGVVGYLIMMGALLGFHVLFGVSQPTLMDAGILFMFYGVYYGVLGRDFAHICTARMASRIGYYTPEGLPKKHLEDGVCAVCGGRLDDSEHVHDADAVVTTKMVEDEDEKLYKLSCGHVFHEFCIRGWVVVGKLQTCPYCKERVDLQRMFKNPWEKPHLFYGKLLDWIRYLVCWQPLIVTAVQGLTTWMGLE</sequence>
<evidence type="ECO:0000255" key="1"/>
<evidence type="ECO:0000255" key="2">
    <source>
        <dbReference type="PROSITE-ProRule" id="PRU00175"/>
    </source>
</evidence>
<evidence type="ECO:0000269" key="3">
    <source>
    </source>
</evidence>
<evidence type="ECO:0000269" key="4">
    <source>
    </source>
</evidence>
<evidence type="ECO:0000305" key="5"/>
<evidence type="ECO:0000312" key="6">
    <source>
        <dbReference type="WormBase" id="C16C10.5"/>
    </source>
</evidence>